<keyword id="KW-1185">Reference proteome</keyword>
<proteinExistence type="inferred from homology"/>
<accession>Q59036</accession>
<name>Y1642_METJA</name>
<gene>
    <name type="ordered locus">MJ1642</name>
</gene>
<sequence length="161" mass="18847">MEELGRNVDVSIFRILRFMNLRKYIGIDNEMLMYYFGKELSKNLNFKNFKELSNFYKEYKLGRIEMVSENPIKIRIYDCISCSGLPDVGKPLCHFEAGFLAGYIENVFNKKCYIIETHCWGLGNKFCQFEVRLVDNKKSENCFASSGDCNGYFGKNRTKKL</sequence>
<feature type="chain" id="PRO_0000107455" description="Uncharacterized protein MJ1642">
    <location>
        <begin position="1"/>
        <end position="161"/>
    </location>
</feature>
<organism>
    <name type="scientific">Methanocaldococcus jannaschii (strain ATCC 43067 / DSM 2661 / JAL-1 / JCM 10045 / NBRC 100440)</name>
    <name type="common">Methanococcus jannaschii</name>
    <dbReference type="NCBI Taxonomy" id="243232"/>
    <lineage>
        <taxon>Archaea</taxon>
        <taxon>Methanobacteriati</taxon>
        <taxon>Methanobacteriota</taxon>
        <taxon>Methanomada group</taxon>
        <taxon>Methanococci</taxon>
        <taxon>Methanococcales</taxon>
        <taxon>Methanocaldococcaceae</taxon>
        <taxon>Methanocaldococcus</taxon>
    </lineage>
</organism>
<evidence type="ECO:0000305" key="1"/>
<dbReference type="EMBL" id="L77117">
    <property type="protein sequence ID" value="AAB99662.1"/>
    <property type="molecule type" value="Genomic_DNA"/>
</dbReference>
<dbReference type="PIR" id="H64504">
    <property type="entry name" value="H64504"/>
</dbReference>
<dbReference type="RefSeq" id="WP_010871166.1">
    <property type="nucleotide sequence ID" value="NC_000909.1"/>
</dbReference>
<dbReference type="SMR" id="Q59036"/>
<dbReference type="STRING" id="243232.MJ_1642"/>
<dbReference type="PaxDb" id="243232-MJ_1642"/>
<dbReference type="EnsemblBacteria" id="AAB99662">
    <property type="protein sequence ID" value="AAB99662"/>
    <property type="gene ID" value="MJ_1642"/>
</dbReference>
<dbReference type="GeneID" id="1452551"/>
<dbReference type="KEGG" id="mja:MJ_1642"/>
<dbReference type="eggNOG" id="arCOG01688">
    <property type="taxonomic scope" value="Archaea"/>
</dbReference>
<dbReference type="HOGENOM" id="CLU_128702_0_0_2"/>
<dbReference type="InParanoid" id="Q59036"/>
<dbReference type="OrthoDB" id="371687at2157"/>
<dbReference type="PhylomeDB" id="Q59036"/>
<dbReference type="Proteomes" id="UP000000805">
    <property type="component" value="Chromosome"/>
</dbReference>
<dbReference type="Gene3D" id="3.30.1380.20">
    <property type="entry name" value="Trafficking protein particle complex subunit 3"/>
    <property type="match status" value="1"/>
</dbReference>
<dbReference type="InterPro" id="IPR019642">
    <property type="entry name" value="DUF2507"/>
</dbReference>
<dbReference type="InterPro" id="IPR024096">
    <property type="entry name" value="NO_sig/Golgi_transp_ligand-bd"/>
</dbReference>
<dbReference type="InterPro" id="IPR004096">
    <property type="entry name" value="V4R"/>
</dbReference>
<dbReference type="PANTHER" id="PTHR35090:SF2">
    <property type="entry name" value="ARSR FAMILY TRANSCRIPTIONAL REGULATOR"/>
    <property type="match status" value="1"/>
</dbReference>
<dbReference type="PANTHER" id="PTHR35090">
    <property type="entry name" value="DNA-DIRECTED RNA POLYMERASE SUBUNIT I"/>
    <property type="match status" value="1"/>
</dbReference>
<dbReference type="Pfam" id="PF10702">
    <property type="entry name" value="DUF2507"/>
    <property type="match status" value="1"/>
</dbReference>
<dbReference type="Pfam" id="PF02830">
    <property type="entry name" value="V4R"/>
    <property type="match status" value="1"/>
</dbReference>
<dbReference type="SMART" id="SM00989">
    <property type="entry name" value="V4R"/>
    <property type="match status" value="1"/>
</dbReference>
<dbReference type="SUPFAM" id="SSF111126">
    <property type="entry name" value="Ligand-binding domain in the NO signalling and Golgi transport"/>
    <property type="match status" value="1"/>
</dbReference>
<reference key="1">
    <citation type="journal article" date="1996" name="Science">
        <title>Complete genome sequence of the methanogenic archaeon, Methanococcus jannaschii.</title>
        <authorList>
            <person name="Bult C.J."/>
            <person name="White O."/>
            <person name="Olsen G.J."/>
            <person name="Zhou L."/>
            <person name="Fleischmann R.D."/>
            <person name="Sutton G.G."/>
            <person name="Blake J.A."/>
            <person name="FitzGerald L.M."/>
            <person name="Clayton R.A."/>
            <person name="Gocayne J.D."/>
            <person name="Kerlavage A.R."/>
            <person name="Dougherty B.A."/>
            <person name="Tomb J.-F."/>
            <person name="Adams M.D."/>
            <person name="Reich C.I."/>
            <person name="Overbeek R."/>
            <person name="Kirkness E.F."/>
            <person name="Weinstock K.G."/>
            <person name="Merrick J.M."/>
            <person name="Glodek A."/>
            <person name="Scott J.L."/>
            <person name="Geoghagen N.S.M."/>
            <person name="Weidman J.F."/>
            <person name="Fuhrmann J.L."/>
            <person name="Nguyen D."/>
            <person name="Utterback T.R."/>
            <person name="Kelley J.M."/>
            <person name="Peterson J.D."/>
            <person name="Sadow P.W."/>
            <person name="Hanna M.C."/>
            <person name="Cotton M.D."/>
            <person name="Roberts K.M."/>
            <person name="Hurst M.A."/>
            <person name="Kaine B.P."/>
            <person name="Borodovsky M."/>
            <person name="Klenk H.-P."/>
            <person name="Fraser C.M."/>
            <person name="Smith H.O."/>
            <person name="Woese C.R."/>
            <person name="Venter J.C."/>
        </authorList>
    </citation>
    <scope>NUCLEOTIDE SEQUENCE [LARGE SCALE GENOMIC DNA]</scope>
    <source>
        <strain>ATCC 43067 / DSM 2661 / JAL-1 / JCM 10045 / NBRC 100440</strain>
    </source>
</reference>
<comment type="similarity">
    <text evidence="1">Belongs to the M.jannaschii MJ0150/MJ0739/MJ0745/MJ1460/MJ1642 family.</text>
</comment>
<protein>
    <recommendedName>
        <fullName>Uncharacterized protein MJ1642</fullName>
    </recommendedName>
</protein>